<organism>
    <name type="scientific">Neisseria meningitidis serogroup A / serotype 4A (strain DSM 15465 / Z2491)</name>
    <dbReference type="NCBI Taxonomy" id="122587"/>
    <lineage>
        <taxon>Bacteria</taxon>
        <taxon>Pseudomonadati</taxon>
        <taxon>Pseudomonadota</taxon>
        <taxon>Betaproteobacteria</taxon>
        <taxon>Neisseriales</taxon>
        <taxon>Neisseriaceae</taxon>
        <taxon>Neisseria</taxon>
    </lineage>
</organism>
<sequence length="706" mass="76258">MFDKHVKTFQYGNQTVTLETGEIARQAAAAVKVSMGDTVVLVAVTTNKEVKEGQDFFPLTVDYLERTYAAGKIPGGFFKREGKQSEKEILTSRLIDRPIRPLFPEGFYHDIQIVAMVVSVDPEIDSDIPAMLGASAALVLSGVPFAGPIGAARVGYINGVYVLNPTKAELAKSQLDLVVAGTSKAVLMVESEAKILPEDVMLGAVVYGHDQMQVAINAINEFADEVNPELWDWKAPETNEELVAKVRGIAGETIKEAFKIRQKQARSAKLDEAWSAVKEALITEETDTLAANEIKGIFKHLEADVVRSQILDGQPRIDGRDTRTVRPLNIQTGVLPRTHGSALFTRGETQALAVATLGTSRDEQIIDALSGEYTDRFMLHYNFPPYSTGEVGRMGAPKRREIGHGRLAKRALLAVLPKPEDFSYTMRVVSEITESNGSSSMASVCGGCLSLLSAGVPLKAHVAGIAMGLILEGNKFAVLTDILGDEDHLGDMDFKVAGTTEGVTALQMDIKIQGITKEIMQIALAQAKEARLHILDQMKAAVAGPQELSAHAPRLFTMKINQDKIREVIGKGGETIRAITAETGTEINIAEDGTITIAATTQEAGDAAKKRIEQITAEVEVGKVYEGTVVKILDNNVGAIVSVMPGKDGLVHISQIAHERVRNVGDYLQVGQVVNVKALEVDDRGRVRLSIKALLDAPAREENAAE</sequence>
<evidence type="ECO:0000255" key="1">
    <source>
        <dbReference type="HAMAP-Rule" id="MF_01595"/>
    </source>
</evidence>
<comment type="function">
    <text evidence="1">Involved in mRNA degradation. Catalyzes the phosphorolysis of single-stranded polyribonucleotides processively in the 3'- to 5'-direction.</text>
</comment>
<comment type="catalytic activity">
    <reaction evidence="1">
        <text>RNA(n+1) + phosphate = RNA(n) + a ribonucleoside 5'-diphosphate</text>
        <dbReference type="Rhea" id="RHEA:22096"/>
        <dbReference type="Rhea" id="RHEA-COMP:14527"/>
        <dbReference type="Rhea" id="RHEA-COMP:17342"/>
        <dbReference type="ChEBI" id="CHEBI:43474"/>
        <dbReference type="ChEBI" id="CHEBI:57930"/>
        <dbReference type="ChEBI" id="CHEBI:140395"/>
        <dbReference type="EC" id="2.7.7.8"/>
    </reaction>
</comment>
<comment type="cofactor">
    <cofactor evidence="1">
        <name>Mg(2+)</name>
        <dbReference type="ChEBI" id="CHEBI:18420"/>
    </cofactor>
</comment>
<comment type="subcellular location">
    <subcellularLocation>
        <location evidence="1">Cytoplasm</location>
    </subcellularLocation>
</comment>
<comment type="similarity">
    <text evidence="1">Belongs to the polyribonucleotide nucleotidyltransferase family.</text>
</comment>
<accession>A1IR09</accession>
<name>PNP_NEIMA</name>
<keyword id="KW-0963">Cytoplasm</keyword>
<keyword id="KW-0460">Magnesium</keyword>
<keyword id="KW-0479">Metal-binding</keyword>
<keyword id="KW-0548">Nucleotidyltransferase</keyword>
<keyword id="KW-0694">RNA-binding</keyword>
<keyword id="KW-0808">Transferase</keyword>
<gene>
    <name evidence="1" type="primary">pnp</name>
    <name type="ordered locus">NMA0969</name>
</gene>
<reference key="1">
    <citation type="journal article" date="2000" name="Nature">
        <title>Complete DNA sequence of a serogroup A strain of Neisseria meningitidis Z2491.</title>
        <authorList>
            <person name="Parkhill J."/>
            <person name="Achtman M."/>
            <person name="James K.D."/>
            <person name="Bentley S.D."/>
            <person name="Churcher C.M."/>
            <person name="Klee S.R."/>
            <person name="Morelli G."/>
            <person name="Basham D."/>
            <person name="Brown D."/>
            <person name="Chillingworth T."/>
            <person name="Davies R.M."/>
            <person name="Davis P."/>
            <person name="Devlin K."/>
            <person name="Feltwell T."/>
            <person name="Hamlin N."/>
            <person name="Holroyd S."/>
            <person name="Jagels K."/>
            <person name="Leather S."/>
            <person name="Moule S."/>
            <person name="Mungall K.L."/>
            <person name="Quail M.A."/>
            <person name="Rajandream M.A."/>
            <person name="Rutherford K.M."/>
            <person name="Simmonds M."/>
            <person name="Skelton J."/>
            <person name="Whitehead S."/>
            <person name="Spratt B.G."/>
            <person name="Barrell B.G."/>
        </authorList>
    </citation>
    <scope>NUCLEOTIDE SEQUENCE [LARGE SCALE GENOMIC DNA]</scope>
    <source>
        <strain>DSM 15465 / Z2491</strain>
    </source>
</reference>
<protein>
    <recommendedName>
        <fullName evidence="1">Polyribonucleotide nucleotidyltransferase</fullName>
        <ecNumber evidence="1">2.7.7.8</ecNumber>
    </recommendedName>
    <alternativeName>
        <fullName evidence="1">Polynucleotide phosphorylase</fullName>
        <shortName evidence="1">PNPase</shortName>
    </alternativeName>
</protein>
<feature type="chain" id="PRO_0000329730" description="Polyribonucleotide nucleotidyltransferase">
    <location>
        <begin position="1"/>
        <end position="706"/>
    </location>
</feature>
<feature type="domain" description="KH" evidence="1">
    <location>
        <begin position="553"/>
        <end position="612"/>
    </location>
</feature>
<feature type="domain" description="S1 motif" evidence="1">
    <location>
        <begin position="622"/>
        <end position="692"/>
    </location>
</feature>
<feature type="binding site" evidence="1">
    <location>
        <position position="487"/>
    </location>
    <ligand>
        <name>Mg(2+)</name>
        <dbReference type="ChEBI" id="CHEBI:18420"/>
    </ligand>
</feature>
<feature type="binding site" evidence="1">
    <location>
        <position position="493"/>
    </location>
    <ligand>
        <name>Mg(2+)</name>
        <dbReference type="ChEBI" id="CHEBI:18420"/>
    </ligand>
</feature>
<proteinExistence type="inferred from homology"/>
<dbReference type="EC" id="2.7.7.8" evidence="1"/>
<dbReference type="EMBL" id="AL157959">
    <property type="protein sequence ID" value="CAM08193.1"/>
    <property type="molecule type" value="Genomic_DNA"/>
</dbReference>
<dbReference type="PIR" id="H81943">
    <property type="entry name" value="H81943"/>
</dbReference>
<dbReference type="SMR" id="A1IR09"/>
<dbReference type="EnsemblBacteria" id="CAM08193">
    <property type="protein sequence ID" value="CAM08193"/>
    <property type="gene ID" value="NMA0969"/>
</dbReference>
<dbReference type="KEGG" id="nma:NMA0969"/>
<dbReference type="HOGENOM" id="CLU_004217_2_2_4"/>
<dbReference type="Proteomes" id="UP000000626">
    <property type="component" value="Chromosome"/>
</dbReference>
<dbReference type="GO" id="GO:0005829">
    <property type="term" value="C:cytosol"/>
    <property type="evidence" value="ECO:0007669"/>
    <property type="project" value="TreeGrafter"/>
</dbReference>
<dbReference type="GO" id="GO:0000175">
    <property type="term" value="F:3'-5'-RNA exonuclease activity"/>
    <property type="evidence" value="ECO:0007669"/>
    <property type="project" value="TreeGrafter"/>
</dbReference>
<dbReference type="GO" id="GO:0000287">
    <property type="term" value="F:magnesium ion binding"/>
    <property type="evidence" value="ECO:0007669"/>
    <property type="project" value="UniProtKB-UniRule"/>
</dbReference>
<dbReference type="GO" id="GO:0004654">
    <property type="term" value="F:polyribonucleotide nucleotidyltransferase activity"/>
    <property type="evidence" value="ECO:0007669"/>
    <property type="project" value="UniProtKB-UniRule"/>
</dbReference>
<dbReference type="GO" id="GO:0003723">
    <property type="term" value="F:RNA binding"/>
    <property type="evidence" value="ECO:0007669"/>
    <property type="project" value="UniProtKB-UniRule"/>
</dbReference>
<dbReference type="GO" id="GO:0006402">
    <property type="term" value="P:mRNA catabolic process"/>
    <property type="evidence" value="ECO:0007669"/>
    <property type="project" value="UniProtKB-UniRule"/>
</dbReference>
<dbReference type="GO" id="GO:0006396">
    <property type="term" value="P:RNA processing"/>
    <property type="evidence" value="ECO:0007669"/>
    <property type="project" value="InterPro"/>
</dbReference>
<dbReference type="CDD" id="cd02393">
    <property type="entry name" value="KH-I_PNPase"/>
    <property type="match status" value="1"/>
</dbReference>
<dbReference type="CDD" id="cd11363">
    <property type="entry name" value="RNase_PH_PNPase_1"/>
    <property type="match status" value="1"/>
</dbReference>
<dbReference type="CDD" id="cd11364">
    <property type="entry name" value="RNase_PH_PNPase_2"/>
    <property type="match status" value="1"/>
</dbReference>
<dbReference type="CDD" id="cd04472">
    <property type="entry name" value="S1_PNPase"/>
    <property type="match status" value="1"/>
</dbReference>
<dbReference type="FunFam" id="3.30.1370.10:FF:000001">
    <property type="entry name" value="Polyribonucleotide nucleotidyltransferase"/>
    <property type="match status" value="1"/>
</dbReference>
<dbReference type="FunFam" id="3.30.230.70:FF:000001">
    <property type="entry name" value="Polyribonucleotide nucleotidyltransferase"/>
    <property type="match status" value="1"/>
</dbReference>
<dbReference type="FunFam" id="3.30.230.70:FF:000002">
    <property type="entry name" value="Polyribonucleotide nucleotidyltransferase"/>
    <property type="match status" value="1"/>
</dbReference>
<dbReference type="Gene3D" id="3.30.230.70">
    <property type="entry name" value="GHMP Kinase, N-terminal domain"/>
    <property type="match status" value="2"/>
</dbReference>
<dbReference type="Gene3D" id="3.30.1370.10">
    <property type="entry name" value="K Homology domain, type 1"/>
    <property type="match status" value="1"/>
</dbReference>
<dbReference type="Gene3D" id="2.40.50.140">
    <property type="entry name" value="Nucleic acid-binding proteins"/>
    <property type="match status" value="1"/>
</dbReference>
<dbReference type="HAMAP" id="MF_01595">
    <property type="entry name" value="PNPase"/>
    <property type="match status" value="1"/>
</dbReference>
<dbReference type="InterPro" id="IPR001247">
    <property type="entry name" value="ExoRNase_PH_dom1"/>
</dbReference>
<dbReference type="InterPro" id="IPR015847">
    <property type="entry name" value="ExoRNase_PH_dom2"/>
</dbReference>
<dbReference type="InterPro" id="IPR036345">
    <property type="entry name" value="ExoRNase_PH_dom2_sf"/>
</dbReference>
<dbReference type="InterPro" id="IPR004087">
    <property type="entry name" value="KH_dom"/>
</dbReference>
<dbReference type="InterPro" id="IPR004088">
    <property type="entry name" value="KH_dom_type_1"/>
</dbReference>
<dbReference type="InterPro" id="IPR036612">
    <property type="entry name" value="KH_dom_type_1_sf"/>
</dbReference>
<dbReference type="InterPro" id="IPR012340">
    <property type="entry name" value="NA-bd_OB-fold"/>
</dbReference>
<dbReference type="InterPro" id="IPR012162">
    <property type="entry name" value="PNPase"/>
</dbReference>
<dbReference type="InterPro" id="IPR027408">
    <property type="entry name" value="PNPase/RNase_PH_dom_sf"/>
</dbReference>
<dbReference type="InterPro" id="IPR015848">
    <property type="entry name" value="PNPase_PH_RNA-bd_bac/org-type"/>
</dbReference>
<dbReference type="InterPro" id="IPR020568">
    <property type="entry name" value="Ribosomal_Su5_D2-typ_SF"/>
</dbReference>
<dbReference type="InterPro" id="IPR003029">
    <property type="entry name" value="S1_domain"/>
</dbReference>
<dbReference type="NCBIfam" id="TIGR03591">
    <property type="entry name" value="polynuc_phos"/>
    <property type="match status" value="1"/>
</dbReference>
<dbReference type="NCBIfam" id="NF008805">
    <property type="entry name" value="PRK11824.1"/>
    <property type="match status" value="1"/>
</dbReference>
<dbReference type="PANTHER" id="PTHR11252">
    <property type="entry name" value="POLYRIBONUCLEOTIDE NUCLEOTIDYLTRANSFERASE"/>
    <property type="match status" value="1"/>
</dbReference>
<dbReference type="PANTHER" id="PTHR11252:SF0">
    <property type="entry name" value="POLYRIBONUCLEOTIDE NUCLEOTIDYLTRANSFERASE 1, MITOCHONDRIAL"/>
    <property type="match status" value="1"/>
</dbReference>
<dbReference type="Pfam" id="PF00013">
    <property type="entry name" value="KH_1"/>
    <property type="match status" value="1"/>
</dbReference>
<dbReference type="Pfam" id="PF03726">
    <property type="entry name" value="PNPase"/>
    <property type="match status" value="1"/>
</dbReference>
<dbReference type="Pfam" id="PF01138">
    <property type="entry name" value="RNase_PH"/>
    <property type="match status" value="2"/>
</dbReference>
<dbReference type="Pfam" id="PF03725">
    <property type="entry name" value="RNase_PH_C"/>
    <property type="match status" value="2"/>
</dbReference>
<dbReference type="Pfam" id="PF00575">
    <property type="entry name" value="S1"/>
    <property type="match status" value="1"/>
</dbReference>
<dbReference type="PIRSF" id="PIRSF005499">
    <property type="entry name" value="PNPase"/>
    <property type="match status" value="1"/>
</dbReference>
<dbReference type="SMART" id="SM00322">
    <property type="entry name" value="KH"/>
    <property type="match status" value="1"/>
</dbReference>
<dbReference type="SMART" id="SM00316">
    <property type="entry name" value="S1"/>
    <property type="match status" value="1"/>
</dbReference>
<dbReference type="SUPFAM" id="SSF54791">
    <property type="entry name" value="Eukaryotic type KH-domain (KH-domain type I)"/>
    <property type="match status" value="1"/>
</dbReference>
<dbReference type="SUPFAM" id="SSF50249">
    <property type="entry name" value="Nucleic acid-binding proteins"/>
    <property type="match status" value="1"/>
</dbReference>
<dbReference type="SUPFAM" id="SSF55666">
    <property type="entry name" value="Ribonuclease PH domain 2-like"/>
    <property type="match status" value="2"/>
</dbReference>
<dbReference type="SUPFAM" id="SSF54211">
    <property type="entry name" value="Ribosomal protein S5 domain 2-like"/>
    <property type="match status" value="2"/>
</dbReference>
<dbReference type="PROSITE" id="PS50084">
    <property type="entry name" value="KH_TYPE_1"/>
    <property type="match status" value="1"/>
</dbReference>
<dbReference type="PROSITE" id="PS50126">
    <property type="entry name" value="S1"/>
    <property type="match status" value="1"/>
</dbReference>